<name>FTSQ_MYCA9</name>
<reference key="1">
    <citation type="journal article" date="2009" name="PLoS ONE">
        <title>Non mycobacterial virulence genes in the genome of the emerging pathogen Mycobacterium abscessus.</title>
        <authorList>
            <person name="Ripoll F."/>
            <person name="Pasek S."/>
            <person name="Schenowitz C."/>
            <person name="Dossat C."/>
            <person name="Barbe V."/>
            <person name="Rottman M."/>
            <person name="Macheras E."/>
            <person name="Heym B."/>
            <person name="Herrmann J.L."/>
            <person name="Daffe M."/>
            <person name="Brosch R."/>
            <person name="Risler J.L."/>
            <person name="Gaillard J.L."/>
        </authorList>
    </citation>
    <scope>NUCLEOTIDE SEQUENCE [LARGE SCALE GENOMIC DNA]</scope>
    <source>
        <strain>ATCC 19977 / DSM 44196 / CCUG 20993 / CIP 104536 / JCM 13569 / NCTC 13031 / TMC 1543 / L948</strain>
    </source>
</reference>
<comment type="function">
    <text evidence="1">Essential cell division protein.</text>
</comment>
<comment type="subcellular location">
    <subcellularLocation>
        <location evidence="1">Cell membrane</location>
        <topology evidence="1">Single-pass type II membrane protein</topology>
    </subcellularLocation>
    <text evidence="1">Localizes to the division septum.</text>
</comment>
<comment type="similarity">
    <text evidence="1">Belongs to the FtsQ/DivIB family. FtsQ subfamily.</text>
</comment>
<organism>
    <name type="scientific">Mycobacteroides abscessus (strain ATCC 19977 / DSM 44196 / CCUG 20993 / CIP 104536 / JCM 13569 / NCTC 13031 / TMC 1543 / L948)</name>
    <name type="common">Mycobacterium abscessus</name>
    <dbReference type="NCBI Taxonomy" id="561007"/>
    <lineage>
        <taxon>Bacteria</taxon>
        <taxon>Bacillati</taxon>
        <taxon>Actinomycetota</taxon>
        <taxon>Actinomycetes</taxon>
        <taxon>Mycobacteriales</taxon>
        <taxon>Mycobacteriaceae</taxon>
        <taxon>Mycobacteroides</taxon>
        <taxon>Mycobacteroides abscessus</taxon>
    </lineage>
</organism>
<sequence length="310" mass="32714">MSEPENTAEDKDAEAAISADAVESETTADGGENPAEGESAEGPRMRARRERMERREAQRRAIALEQARREAKAAAKGKYVEQGKGAGRGKVQGLQTLLLVVLLALIAVGLGSILYFTPLMSVRQTVVTGTGVVTQEDVLGALSIPKGTRLLQIDTAAAADRVASIRRVASARVQCEYPSTLRVTIVERVPVAAWTGADGTHLIDRDGVDFANEPPPPGIPALDVVAPAPQDPTTKAALQVLTSLAPDLARQVAKIAAPSVSSITLTLDDGRTIVWGTTERTAEKAEKLGALLTQPGRTYDVSSPDLPTVK</sequence>
<protein>
    <recommendedName>
        <fullName evidence="1">Cell division protein FtsQ</fullName>
    </recommendedName>
</protein>
<evidence type="ECO:0000255" key="1">
    <source>
        <dbReference type="HAMAP-Rule" id="MF_00911"/>
    </source>
</evidence>
<evidence type="ECO:0000255" key="2">
    <source>
        <dbReference type="PROSITE-ProRule" id="PRU01115"/>
    </source>
</evidence>
<evidence type="ECO:0000256" key="3">
    <source>
        <dbReference type="SAM" id="MobiDB-lite"/>
    </source>
</evidence>
<keyword id="KW-0131">Cell cycle</keyword>
<keyword id="KW-0132">Cell division</keyword>
<keyword id="KW-1003">Cell membrane</keyword>
<keyword id="KW-0472">Membrane</keyword>
<keyword id="KW-1185">Reference proteome</keyword>
<keyword id="KW-0812">Transmembrane</keyword>
<keyword id="KW-1133">Transmembrane helix</keyword>
<proteinExistence type="inferred from homology"/>
<gene>
    <name evidence="1" type="primary">ftsQ</name>
    <name type="ordered locus">MAB_2008</name>
</gene>
<dbReference type="EMBL" id="CU458896">
    <property type="protein sequence ID" value="CAM62090.1"/>
    <property type="molecule type" value="Genomic_DNA"/>
</dbReference>
<dbReference type="RefSeq" id="WP_005110500.1">
    <property type="nucleotide sequence ID" value="NZ_MLCG01000002.1"/>
</dbReference>
<dbReference type="SMR" id="B1MP39"/>
<dbReference type="GeneID" id="93378946"/>
<dbReference type="KEGG" id="mab:MAB_2008"/>
<dbReference type="Proteomes" id="UP000007137">
    <property type="component" value="Chromosome"/>
</dbReference>
<dbReference type="GO" id="GO:0032153">
    <property type="term" value="C:cell division site"/>
    <property type="evidence" value="ECO:0007669"/>
    <property type="project" value="UniProtKB-UniRule"/>
</dbReference>
<dbReference type="GO" id="GO:0005886">
    <property type="term" value="C:plasma membrane"/>
    <property type="evidence" value="ECO:0007669"/>
    <property type="project" value="UniProtKB-SubCell"/>
</dbReference>
<dbReference type="GO" id="GO:0090529">
    <property type="term" value="P:cell septum assembly"/>
    <property type="evidence" value="ECO:0007669"/>
    <property type="project" value="InterPro"/>
</dbReference>
<dbReference type="GO" id="GO:0043093">
    <property type="term" value="P:FtsZ-dependent cytokinesis"/>
    <property type="evidence" value="ECO:0007669"/>
    <property type="project" value="UniProtKB-UniRule"/>
</dbReference>
<dbReference type="Gene3D" id="3.10.20.310">
    <property type="entry name" value="membrane protein fhac"/>
    <property type="match status" value="1"/>
</dbReference>
<dbReference type="HAMAP" id="MF_00911">
    <property type="entry name" value="FtsQ_subfam"/>
    <property type="match status" value="1"/>
</dbReference>
<dbReference type="InterPro" id="IPR005548">
    <property type="entry name" value="Cell_div_FtsQ/DivIB_C"/>
</dbReference>
<dbReference type="InterPro" id="IPR026579">
    <property type="entry name" value="FtsQ"/>
</dbReference>
<dbReference type="InterPro" id="IPR050487">
    <property type="entry name" value="FtsQ_DivIB"/>
</dbReference>
<dbReference type="InterPro" id="IPR034746">
    <property type="entry name" value="POTRA"/>
</dbReference>
<dbReference type="InterPro" id="IPR013685">
    <property type="entry name" value="POTRA_FtsQ_type"/>
</dbReference>
<dbReference type="PANTHER" id="PTHR37820">
    <property type="entry name" value="CELL DIVISION PROTEIN DIVIB"/>
    <property type="match status" value="1"/>
</dbReference>
<dbReference type="PANTHER" id="PTHR37820:SF1">
    <property type="entry name" value="CELL DIVISION PROTEIN FTSQ"/>
    <property type="match status" value="1"/>
</dbReference>
<dbReference type="Pfam" id="PF03799">
    <property type="entry name" value="FtsQ_DivIB_C"/>
    <property type="match status" value="1"/>
</dbReference>
<dbReference type="Pfam" id="PF08478">
    <property type="entry name" value="POTRA_1"/>
    <property type="match status" value="1"/>
</dbReference>
<dbReference type="PROSITE" id="PS51779">
    <property type="entry name" value="POTRA"/>
    <property type="match status" value="1"/>
</dbReference>
<feature type="chain" id="PRO_0000414677" description="Cell division protein FtsQ">
    <location>
        <begin position="1"/>
        <end position="310"/>
    </location>
</feature>
<feature type="topological domain" description="Cytoplasmic" evidence="1">
    <location>
        <begin position="1"/>
        <end position="95"/>
    </location>
</feature>
<feature type="transmembrane region" description="Helical" evidence="1">
    <location>
        <begin position="96"/>
        <end position="116"/>
    </location>
</feature>
<feature type="topological domain" description="Extracellular" evidence="1">
    <location>
        <begin position="117"/>
        <end position="310"/>
    </location>
</feature>
<feature type="domain" description="POTRA" evidence="2">
    <location>
        <begin position="120"/>
        <end position="188"/>
    </location>
</feature>
<feature type="region of interest" description="Disordered" evidence="3">
    <location>
        <begin position="1"/>
        <end position="57"/>
    </location>
</feature>
<accession>B1MP39</accession>